<proteinExistence type="inferred from homology"/>
<dbReference type="EC" id="1.17.1.8" evidence="1"/>
<dbReference type="EMBL" id="BA000019">
    <property type="protein sequence ID" value="BAB74241.1"/>
    <property type="molecule type" value="Genomic_DNA"/>
</dbReference>
<dbReference type="PIR" id="AG2123">
    <property type="entry name" value="AG2123"/>
</dbReference>
<dbReference type="RefSeq" id="WP_010996698.1">
    <property type="nucleotide sequence ID" value="NZ_RSCN01000002.1"/>
</dbReference>
<dbReference type="SMR" id="Q8YU19"/>
<dbReference type="STRING" id="103690.gene:10494573"/>
<dbReference type="KEGG" id="ana:alr2542"/>
<dbReference type="eggNOG" id="COG0289">
    <property type="taxonomic scope" value="Bacteria"/>
</dbReference>
<dbReference type="OrthoDB" id="9790352at2"/>
<dbReference type="UniPathway" id="UPA00034">
    <property type="reaction ID" value="UER00018"/>
</dbReference>
<dbReference type="Proteomes" id="UP000002483">
    <property type="component" value="Chromosome"/>
</dbReference>
<dbReference type="GO" id="GO:0005829">
    <property type="term" value="C:cytosol"/>
    <property type="evidence" value="ECO:0007669"/>
    <property type="project" value="TreeGrafter"/>
</dbReference>
<dbReference type="GO" id="GO:0008839">
    <property type="term" value="F:4-hydroxy-tetrahydrodipicolinate reductase"/>
    <property type="evidence" value="ECO:0007669"/>
    <property type="project" value="UniProtKB-EC"/>
</dbReference>
<dbReference type="GO" id="GO:0051287">
    <property type="term" value="F:NAD binding"/>
    <property type="evidence" value="ECO:0007669"/>
    <property type="project" value="UniProtKB-UniRule"/>
</dbReference>
<dbReference type="GO" id="GO:0050661">
    <property type="term" value="F:NADP binding"/>
    <property type="evidence" value="ECO:0007669"/>
    <property type="project" value="UniProtKB-UniRule"/>
</dbReference>
<dbReference type="GO" id="GO:0016726">
    <property type="term" value="F:oxidoreductase activity, acting on CH or CH2 groups, NAD or NADP as acceptor"/>
    <property type="evidence" value="ECO:0007669"/>
    <property type="project" value="UniProtKB-UniRule"/>
</dbReference>
<dbReference type="GO" id="GO:0019877">
    <property type="term" value="P:diaminopimelate biosynthetic process"/>
    <property type="evidence" value="ECO:0007669"/>
    <property type="project" value="UniProtKB-UniRule"/>
</dbReference>
<dbReference type="GO" id="GO:0009089">
    <property type="term" value="P:lysine biosynthetic process via diaminopimelate"/>
    <property type="evidence" value="ECO:0007669"/>
    <property type="project" value="UniProtKB-UniRule"/>
</dbReference>
<dbReference type="CDD" id="cd02274">
    <property type="entry name" value="DHDPR_N"/>
    <property type="match status" value="1"/>
</dbReference>
<dbReference type="FunFam" id="3.30.360.10:FF:000009">
    <property type="entry name" value="4-hydroxy-tetrahydrodipicolinate reductase"/>
    <property type="match status" value="1"/>
</dbReference>
<dbReference type="Gene3D" id="3.30.360.10">
    <property type="entry name" value="Dihydrodipicolinate Reductase, domain 2"/>
    <property type="match status" value="1"/>
</dbReference>
<dbReference type="Gene3D" id="3.40.50.720">
    <property type="entry name" value="NAD(P)-binding Rossmann-like Domain"/>
    <property type="match status" value="1"/>
</dbReference>
<dbReference type="HAMAP" id="MF_00102">
    <property type="entry name" value="DapB"/>
    <property type="match status" value="1"/>
</dbReference>
<dbReference type="InterPro" id="IPR022663">
    <property type="entry name" value="DapB_C"/>
</dbReference>
<dbReference type="InterPro" id="IPR000846">
    <property type="entry name" value="DapB_N"/>
</dbReference>
<dbReference type="InterPro" id="IPR022664">
    <property type="entry name" value="DapB_N_CS"/>
</dbReference>
<dbReference type="InterPro" id="IPR023940">
    <property type="entry name" value="DHDPR_bac"/>
</dbReference>
<dbReference type="InterPro" id="IPR036291">
    <property type="entry name" value="NAD(P)-bd_dom_sf"/>
</dbReference>
<dbReference type="NCBIfam" id="TIGR00036">
    <property type="entry name" value="dapB"/>
    <property type="match status" value="1"/>
</dbReference>
<dbReference type="PANTHER" id="PTHR20836:SF0">
    <property type="entry name" value="4-HYDROXY-TETRAHYDRODIPICOLINATE REDUCTASE 1, CHLOROPLASTIC-RELATED"/>
    <property type="match status" value="1"/>
</dbReference>
<dbReference type="PANTHER" id="PTHR20836">
    <property type="entry name" value="DIHYDRODIPICOLINATE REDUCTASE"/>
    <property type="match status" value="1"/>
</dbReference>
<dbReference type="Pfam" id="PF05173">
    <property type="entry name" value="DapB_C"/>
    <property type="match status" value="1"/>
</dbReference>
<dbReference type="Pfam" id="PF01113">
    <property type="entry name" value="DapB_N"/>
    <property type="match status" value="1"/>
</dbReference>
<dbReference type="PIRSF" id="PIRSF000161">
    <property type="entry name" value="DHPR"/>
    <property type="match status" value="1"/>
</dbReference>
<dbReference type="SUPFAM" id="SSF55347">
    <property type="entry name" value="Glyceraldehyde-3-phosphate dehydrogenase-like, C-terminal domain"/>
    <property type="match status" value="1"/>
</dbReference>
<dbReference type="SUPFAM" id="SSF51735">
    <property type="entry name" value="NAD(P)-binding Rossmann-fold domains"/>
    <property type="match status" value="1"/>
</dbReference>
<dbReference type="PROSITE" id="PS01298">
    <property type="entry name" value="DAPB"/>
    <property type="match status" value="1"/>
</dbReference>
<keyword id="KW-0028">Amino-acid biosynthesis</keyword>
<keyword id="KW-0963">Cytoplasm</keyword>
<keyword id="KW-0220">Diaminopimelate biosynthesis</keyword>
<keyword id="KW-0457">Lysine biosynthesis</keyword>
<keyword id="KW-0520">NAD</keyword>
<keyword id="KW-0521">NADP</keyword>
<keyword id="KW-0560">Oxidoreductase</keyword>
<keyword id="KW-1185">Reference proteome</keyword>
<name>DAPB_NOSS1</name>
<evidence type="ECO:0000255" key="1">
    <source>
        <dbReference type="HAMAP-Rule" id="MF_00102"/>
    </source>
</evidence>
<evidence type="ECO:0000305" key="2"/>
<organism>
    <name type="scientific">Nostoc sp. (strain PCC 7120 / SAG 25.82 / UTEX 2576)</name>
    <dbReference type="NCBI Taxonomy" id="103690"/>
    <lineage>
        <taxon>Bacteria</taxon>
        <taxon>Bacillati</taxon>
        <taxon>Cyanobacteriota</taxon>
        <taxon>Cyanophyceae</taxon>
        <taxon>Nostocales</taxon>
        <taxon>Nostocaceae</taxon>
        <taxon>Nostoc</taxon>
    </lineage>
</organism>
<protein>
    <recommendedName>
        <fullName evidence="1">4-hydroxy-tetrahydrodipicolinate reductase</fullName>
        <shortName evidence="1">HTPA reductase</shortName>
        <ecNumber evidence="1">1.17.1.8</ecNumber>
    </recommendedName>
</protein>
<reference key="1">
    <citation type="journal article" date="2001" name="DNA Res.">
        <title>Complete genomic sequence of the filamentous nitrogen-fixing cyanobacterium Anabaena sp. strain PCC 7120.</title>
        <authorList>
            <person name="Kaneko T."/>
            <person name="Nakamura Y."/>
            <person name="Wolk C.P."/>
            <person name="Kuritz T."/>
            <person name="Sasamoto S."/>
            <person name="Watanabe A."/>
            <person name="Iriguchi M."/>
            <person name="Ishikawa A."/>
            <person name="Kawashima K."/>
            <person name="Kimura T."/>
            <person name="Kishida Y."/>
            <person name="Kohara M."/>
            <person name="Matsumoto M."/>
            <person name="Matsuno A."/>
            <person name="Muraki A."/>
            <person name="Nakazaki N."/>
            <person name="Shimpo S."/>
            <person name="Sugimoto M."/>
            <person name="Takazawa M."/>
            <person name="Yamada M."/>
            <person name="Yasuda M."/>
            <person name="Tabata S."/>
        </authorList>
    </citation>
    <scope>NUCLEOTIDE SEQUENCE [LARGE SCALE GENOMIC DNA]</scope>
    <source>
        <strain>PCC 7120 / SAG 25.82 / UTEX 2576</strain>
    </source>
</reference>
<gene>
    <name evidence="1" type="primary">dapB</name>
    <name type="ordered locus">alr2542</name>
</gene>
<accession>Q8YU19</accession>
<feature type="chain" id="PRO_0000141406" description="4-hydroxy-tetrahydrodipicolinate reductase">
    <location>
        <begin position="1"/>
        <end position="278"/>
    </location>
</feature>
<feature type="active site" description="Proton donor/acceptor" evidence="1">
    <location>
        <position position="167"/>
    </location>
</feature>
<feature type="active site" description="Proton donor" evidence="1">
    <location>
        <position position="171"/>
    </location>
</feature>
<feature type="binding site" evidence="1">
    <location>
        <begin position="13"/>
        <end position="18"/>
    </location>
    <ligand>
        <name>NAD(+)</name>
        <dbReference type="ChEBI" id="CHEBI:57540"/>
    </ligand>
</feature>
<feature type="binding site" evidence="1">
    <location>
        <begin position="111"/>
        <end position="113"/>
    </location>
    <ligand>
        <name>NAD(+)</name>
        <dbReference type="ChEBI" id="CHEBI:57540"/>
    </ligand>
</feature>
<feature type="binding site" evidence="1">
    <location>
        <position position="168"/>
    </location>
    <ligand>
        <name>(S)-2,3,4,5-tetrahydrodipicolinate</name>
        <dbReference type="ChEBI" id="CHEBI:16845"/>
    </ligand>
</feature>
<feature type="binding site" evidence="1">
    <location>
        <begin position="177"/>
        <end position="178"/>
    </location>
    <ligand>
        <name>(S)-2,3,4,5-tetrahydrodipicolinate</name>
        <dbReference type="ChEBI" id="CHEBI:16845"/>
    </ligand>
</feature>
<sequence length="278" mass="29522">MTNQAPIPVIVNGAAGKMGREVVKAVAQAPDLNLLGAIDSSPEHQGKDAGELAGLSEPLEVPITNQLEPMLGYVAGERQGPPGVIVDFTHPDSVYDNVRSAIAYGIRPVVGTTGLSPAQIQNLADFAEKASTGCLIIPNFSIGMVLLQQAAVTASQYFDHVEIIELHHNQKADAPSGTAIQTAELLAELGKTFNSAIVEETEKIPGARGSLAEEGIRIHSVRLPGLIAHQEVIFGAPGQIYTLRHDTSDRACYMPGVLLAIRKVLQLKSLVYGLEKIL</sequence>
<comment type="function">
    <text evidence="1">Catalyzes the conversion of 4-hydroxy-tetrahydrodipicolinate (HTPA) to tetrahydrodipicolinate.</text>
</comment>
<comment type="catalytic activity">
    <reaction evidence="1">
        <text>(S)-2,3,4,5-tetrahydrodipicolinate + NAD(+) + H2O = (2S,4S)-4-hydroxy-2,3,4,5-tetrahydrodipicolinate + NADH + H(+)</text>
        <dbReference type="Rhea" id="RHEA:35323"/>
        <dbReference type="ChEBI" id="CHEBI:15377"/>
        <dbReference type="ChEBI" id="CHEBI:15378"/>
        <dbReference type="ChEBI" id="CHEBI:16845"/>
        <dbReference type="ChEBI" id="CHEBI:57540"/>
        <dbReference type="ChEBI" id="CHEBI:57945"/>
        <dbReference type="ChEBI" id="CHEBI:67139"/>
        <dbReference type="EC" id="1.17.1.8"/>
    </reaction>
</comment>
<comment type="catalytic activity">
    <reaction evidence="1">
        <text>(S)-2,3,4,5-tetrahydrodipicolinate + NADP(+) + H2O = (2S,4S)-4-hydroxy-2,3,4,5-tetrahydrodipicolinate + NADPH + H(+)</text>
        <dbReference type="Rhea" id="RHEA:35331"/>
        <dbReference type="ChEBI" id="CHEBI:15377"/>
        <dbReference type="ChEBI" id="CHEBI:15378"/>
        <dbReference type="ChEBI" id="CHEBI:16845"/>
        <dbReference type="ChEBI" id="CHEBI:57783"/>
        <dbReference type="ChEBI" id="CHEBI:58349"/>
        <dbReference type="ChEBI" id="CHEBI:67139"/>
        <dbReference type="EC" id="1.17.1.8"/>
    </reaction>
</comment>
<comment type="pathway">
    <text evidence="1">Amino-acid biosynthesis; L-lysine biosynthesis via DAP pathway; (S)-tetrahydrodipicolinate from L-aspartate: step 4/4.</text>
</comment>
<comment type="subcellular location">
    <subcellularLocation>
        <location evidence="1">Cytoplasm</location>
    </subcellularLocation>
</comment>
<comment type="similarity">
    <text evidence="1">Belongs to the DapB family.</text>
</comment>
<comment type="caution">
    <text evidence="2">Was originally thought to be a dihydrodipicolinate reductase (DHDPR), catalyzing the conversion of dihydrodipicolinate to tetrahydrodipicolinate. However, it was shown in E.coli that the substrate of the enzymatic reaction is not dihydrodipicolinate (DHDP) but in fact (2S,4S)-4-hydroxy-2,3,4,5-tetrahydrodipicolinic acid (HTPA), the product released by the DapA-catalyzed reaction.</text>
</comment>